<keyword id="KW-0002">3D-structure</keyword>
<keyword id="KW-0963">Cytoplasm</keyword>
<keyword id="KW-0903">Direct protein sequencing</keyword>
<keyword id="KW-1017">Isopeptide bond</keyword>
<keyword id="KW-0597">Phosphoprotein</keyword>
<keyword id="KW-1185">Reference proteome</keyword>
<keyword id="KW-0687">Ribonucleoprotein</keyword>
<keyword id="KW-0689">Ribosomal protein</keyword>
<keyword id="KW-0832">Ubl conjugation</keyword>
<proteinExistence type="evidence at protein level"/>
<dbReference type="EMBL" id="Z28180">
    <property type="protein sequence ID" value="CAA82023.1"/>
    <property type="molecule type" value="Genomic_DNA"/>
</dbReference>
<dbReference type="EMBL" id="Z28179">
    <property type="protein sequence ID" value="CAA82022.1"/>
    <property type="molecule type" value="Genomic_DNA"/>
</dbReference>
<dbReference type="EMBL" id="X74151">
    <property type="protein sequence ID" value="CAA52258.1"/>
    <property type="molecule type" value="Genomic_DNA"/>
</dbReference>
<dbReference type="EMBL" id="BK006944">
    <property type="protein sequence ID" value="DAA08987.1"/>
    <property type="molecule type" value="Genomic_DNA"/>
</dbReference>
<dbReference type="PIR" id="S38012">
    <property type="entry name" value="S38012"/>
</dbReference>
<dbReference type="RefSeq" id="NP_012741.1">
    <property type="nucleotide sequence ID" value="NM_001179746.1"/>
</dbReference>
<dbReference type="PDB" id="2WW9">
    <property type="method" value="EM"/>
    <property type="resolution" value="8.60 A"/>
    <property type="chains" value="I=1-184"/>
</dbReference>
<dbReference type="PDB" id="2WWA">
    <property type="method" value="EM"/>
    <property type="resolution" value="8.90 A"/>
    <property type="chains" value="I=1-184"/>
</dbReference>
<dbReference type="PDB" id="2WWB">
    <property type="method" value="EM"/>
    <property type="resolution" value="6.48 A"/>
    <property type="chains" value="I=1-184"/>
</dbReference>
<dbReference type="PDB" id="3J6X">
    <property type="method" value="EM"/>
    <property type="resolution" value="6.10 A"/>
    <property type="chains" value="57=1-184"/>
</dbReference>
<dbReference type="PDB" id="3J6Y">
    <property type="method" value="EM"/>
    <property type="resolution" value="6.10 A"/>
    <property type="chains" value="57=1-184"/>
</dbReference>
<dbReference type="PDB" id="3J77">
    <property type="method" value="EM"/>
    <property type="resolution" value="6.20 A"/>
    <property type="chains" value="67=1-184"/>
</dbReference>
<dbReference type="PDB" id="3J78">
    <property type="method" value="EM"/>
    <property type="resolution" value="6.30 A"/>
    <property type="chains" value="67=1-184"/>
</dbReference>
<dbReference type="PDB" id="3JCT">
    <property type="method" value="EM"/>
    <property type="resolution" value="3.08 A"/>
    <property type="chains" value="P=1-184"/>
</dbReference>
<dbReference type="PDB" id="4U3M">
    <property type="method" value="X-ray"/>
    <property type="resolution" value="3.00 A"/>
    <property type="chains" value="M7/m7=2-184"/>
</dbReference>
<dbReference type="PDB" id="4U3N">
    <property type="method" value="X-ray"/>
    <property type="resolution" value="3.20 A"/>
    <property type="chains" value="M7/m7=2-184"/>
</dbReference>
<dbReference type="PDB" id="4U3U">
    <property type="method" value="X-ray"/>
    <property type="resolution" value="2.90 A"/>
    <property type="chains" value="M7/m7=2-184"/>
</dbReference>
<dbReference type="PDB" id="4U4N">
    <property type="method" value="X-ray"/>
    <property type="resolution" value="3.10 A"/>
    <property type="chains" value="M7/m7=2-184"/>
</dbReference>
<dbReference type="PDB" id="4U4O">
    <property type="method" value="X-ray"/>
    <property type="resolution" value="3.60 A"/>
    <property type="chains" value="M7/m7=2-184"/>
</dbReference>
<dbReference type="PDB" id="4U4Q">
    <property type="method" value="X-ray"/>
    <property type="resolution" value="3.00 A"/>
    <property type="chains" value="M7/m7=2-184"/>
</dbReference>
<dbReference type="PDB" id="4U4R">
    <property type="method" value="X-ray"/>
    <property type="resolution" value="2.80 A"/>
    <property type="chains" value="M7/m7=2-184"/>
</dbReference>
<dbReference type="PDB" id="4U4U">
    <property type="method" value="X-ray"/>
    <property type="resolution" value="3.00 A"/>
    <property type="chains" value="M7/m7=2-184"/>
</dbReference>
<dbReference type="PDB" id="4U4Y">
    <property type="method" value="X-ray"/>
    <property type="resolution" value="3.20 A"/>
    <property type="chains" value="M7/m7=2-184"/>
</dbReference>
<dbReference type="PDB" id="4U4Z">
    <property type="method" value="X-ray"/>
    <property type="resolution" value="3.10 A"/>
    <property type="chains" value="M7/m7=2-184"/>
</dbReference>
<dbReference type="PDB" id="4U50">
    <property type="method" value="X-ray"/>
    <property type="resolution" value="3.20 A"/>
    <property type="chains" value="M7/m7=2-184"/>
</dbReference>
<dbReference type="PDB" id="4U51">
    <property type="method" value="X-ray"/>
    <property type="resolution" value="3.20 A"/>
    <property type="chains" value="M7/m7=2-184"/>
</dbReference>
<dbReference type="PDB" id="4U52">
    <property type="method" value="X-ray"/>
    <property type="resolution" value="3.00 A"/>
    <property type="chains" value="M7/m7=2-184"/>
</dbReference>
<dbReference type="PDB" id="4U53">
    <property type="method" value="X-ray"/>
    <property type="resolution" value="3.30 A"/>
    <property type="chains" value="M7/m7=2-184"/>
</dbReference>
<dbReference type="PDB" id="4U55">
    <property type="method" value="X-ray"/>
    <property type="resolution" value="3.20 A"/>
    <property type="chains" value="M7/m7=2-184"/>
</dbReference>
<dbReference type="PDB" id="4U56">
    <property type="method" value="X-ray"/>
    <property type="resolution" value="3.45 A"/>
    <property type="chains" value="M7/m7=2-184"/>
</dbReference>
<dbReference type="PDB" id="4U6F">
    <property type="method" value="X-ray"/>
    <property type="resolution" value="3.10 A"/>
    <property type="chains" value="M7/m7=2-184"/>
</dbReference>
<dbReference type="PDB" id="4V4B">
    <property type="method" value="EM"/>
    <property type="resolution" value="11.70 A"/>
    <property type="chains" value="BN=2-184"/>
</dbReference>
<dbReference type="PDB" id="4V5Z">
    <property type="method" value="EM"/>
    <property type="resolution" value="8.70 A"/>
    <property type="chains" value="Br=1-183"/>
</dbReference>
<dbReference type="PDB" id="4V6I">
    <property type="method" value="EM"/>
    <property type="resolution" value="8.80 A"/>
    <property type="chains" value="BV=1-170"/>
</dbReference>
<dbReference type="PDB" id="4V7F">
    <property type="method" value="EM"/>
    <property type="resolution" value="8.70 A"/>
    <property type="chains" value="U=1-184"/>
</dbReference>
<dbReference type="PDB" id="4V7R">
    <property type="method" value="X-ray"/>
    <property type="resolution" value="4.00 A"/>
    <property type="chains" value="BQ/DQ=1-184"/>
</dbReference>
<dbReference type="PDB" id="4V88">
    <property type="method" value="X-ray"/>
    <property type="resolution" value="3.00 A"/>
    <property type="chains" value="BP/DP=1-184"/>
</dbReference>
<dbReference type="PDB" id="4V8T">
    <property type="method" value="EM"/>
    <property type="resolution" value="8.10 A"/>
    <property type="chains" value="P=1-184"/>
</dbReference>
<dbReference type="PDB" id="4V8Y">
    <property type="method" value="EM"/>
    <property type="resolution" value="4.30 A"/>
    <property type="chains" value="BP=2-184"/>
</dbReference>
<dbReference type="PDB" id="4V8Z">
    <property type="method" value="EM"/>
    <property type="resolution" value="6.60 A"/>
    <property type="chains" value="BP=2-184"/>
</dbReference>
<dbReference type="PDB" id="4V91">
    <property type="method" value="EM"/>
    <property type="resolution" value="3.70 A"/>
    <property type="chains" value="P=1-184"/>
</dbReference>
<dbReference type="PDB" id="5APN">
    <property type="method" value="EM"/>
    <property type="resolution" value="3.91 A"/>
    <property type="chains" value="P=1-184"/>
</dbReference>
<dbReference type="PDB" id="5APO">
    <property type="method" value="EM"/>
    <property type="resolution" value="3.41 A"/>
    <property type="chains" value="P=1-184"/>
</dbReference>
<dbReference type="PDB" id="5DAT">
    <property type="method" value="X-ray"/>
    <property type="resolution" value="3.15 A"/>
    <property type="chains" value="M7/m7=2-184"/>
</dbReference>
<dbReference type="PDB" id="5DC3">
    <property type="method" value="X-ray"/>
    <property type="resolution" value="3.25 A"/>
    <property type="chains" value="M7/m7=2-184"/>
</dbReference>
<dbReference type="PDB" id="5DGE">
    <property type="method" value="X-ray"/>
    <property type="resolution" value="3.45 A"/>
    <property type="chains" value="M7/m7=2-184"/>
</dbReference>
<dbReference type="PDB" id="5DGF">
    <property type="method" value="X-ray"/>
    <property type="resolution" value="3.30 A"/>
    <property type="chains" value="M7/m7=2-184"/>
</dbReference>
<dbReference type="PDB" id="5DGV">
    <property type="method" value="X-ray"/>
    <property type="resolution" value="3.10 A"/>
    <property type="chains" value="M7/m7=2-184"/>
</dbReference>
<dbReference type="PDB" id="5FCI">
    <property type="method" value="X-ray"/>
    <property type="resolution" value="3.40 A"/>
    <property type="chains" value="M7/m7=2-184"/>
</dbReference>
<dbReference type="PDB" id="5FCJ">
    <property type="method" value="X-ray"/>
    <property type="resolution" value="3.10 A"/>
    <property type="chains" value="M7/m7=2-184"/>
</dbReference>
<dbReference type="PDB" id="5GAK">
    <property type="method" value="EM"/>
    <property type="resolution" value="3.88 A"/>
    <property type="chains" value="R=1-184"/>
</dbReference>
<dbReference type="PDB" id="5H4P">
    <property type="method" value="EM"/>
    <property type="resolution" value="3.07 A"/>
    <property type="chains" value="P=1-184"/>
</dbReference>
<dbReference type="PDB" id="5I4L">
    <property type="method" value="X-ray"/>
    <property type="resolution" value="3.10 A"/>
    <property type="chains" value="M7/m7=2-184"/>
</dbReference>
<dbReference type="PDB" id="5JCS">
    <property type="method" value="EM"/>
    <property type="resolution" value="9.50 A"/>
    <property type="chains" value="P=1-184"/>
</dbReference>
<dbReference type="PDB" id="5JUO">
    <property type="method" value="EM"/>
    <property type="resolution" value="4.00 A"/>
    <property type="chains" value="U=1-184"/>
</dbReference>
<dbReference type="PDB" id="5JUP">
    <property type="method" value="EM"/>
    <property type="resolution" value="3.50 A"/>
    <property type="chains" value="U=1-184"/>
</dbReference>
<dbReference type="PDB" id="5JUS">
    <property type="method" value="EM"/>
    <property type="resolution" value="4.20 A"/>
    <property type="chains" value="U=1-184"/>
</dbReference>
<dbReference type="PDB" id="5JUT">
    <property type="method" value="EM"/>
    <property type="resolution" value="4.00 A"/>
    <property type="chains" value="U=1-184"/>
</dbReference>
<dbReference type="PDB" id="5JUU">
    <property type="method" value="EM"/>
    <property type="resolution" value="4.00 A"/>
    <property type="chains" value="U=1-184"/>
</dbReference>
<dbReference type="PDB" id="5LYB">
    <property type="method" value="X-ray"/>
    <property type="resolution" value="3.25 A"/>
    <property type="chains" value="M7/m7=2-184"/>
</dbReference>
<dbReference type="PDB" id="5M1J">
    <property type="method" value="EM"/>
    <property type="resolution" value="3.30 A"/>
    <property type="chains" value="P5=2-184"/>
</dbReference>
<dbReference type="PDB" id="5MC6">
    <property type="method" value="EM"/>
    <property type="resolution" value="3.80 A"/>
    <property type="chains" value="AX=1-184"/>
</dbReference>
<dbReference type="PDB" id="5MEI">
    <property type="method" value="X-ray"/>
    <property type="resolution" value="3.50 A"/>
    <property type="chains" value="CR/x=2-184"/>
</dbReference>
<dbReference type="PDB" id="5NDG">
    <property type="method" value="X-ray"/>
    <property type="resolution" value="3.70 A"/>
    <property type="chains" value="M7/m7=1-184"/>
</dbReference>
<dbReference type="PDB" id="5NDV">
    <property type="method" value="X-ray"/>
    <property type="resolution" value="3.30 A"/>
    <property type="chains" value="M7/m7=1-184"/>
</dbReference>
<dbReference type="PDB" id="5NDW">
    <property type="method" value="X-ray"/>
    <property type="resolution" value="3.70 A"/>
    <property type="chains" value="M7/m7=1-184"/>
</dbReference>
<dbReference type="PDB" id="5OBM">
    <property type="method" value="X-ray"/>
    <property type="resolution" value="3.40 A"/>
    <property type="chains" value="M7/m7=1-184"/>
</dbReference>
<dbReference type="PDB" id="5ON6">
    <property type="method" value="X-ray"/>
    <property type="resolution" value="3.10 A"/>
    <property type="chains" value="CR/x=2-184"/>
</dbReference>
<dbReference type="PDB" id="5T62">
    <property type="method" value="EM"/>
    <property type="resolution" value="3.30 A"/>
    <property type="chains" value="c=1-184"/>
</dbReference>
<dbReference type="PDB" id="5T6R">
    <property type="method" value="EM"/>
    <property type="resolution" value="4.50 A"/>
    <property type="chains" value="c=1-184"/>
</dbReference>
<dbReference type="PDB" id="5TBW">
    <property type="method" value="X-ray"/>
    <property type="resolution" value="3.00 A"/>
    <property type="chains" value="CR/x=2-184"/>
</dbReference>
<dbReference type="PDB" id="5TGA">
    <property type="method" value="X-ray"/>
    <property type="resolution" value="3.30 A"/>
    <property type="chains" value="M7/m7=2-184"/>
</dbReference>
<dbReference type="PDB" id="5TGM">
    <property type="method" value="X-ray"/>
    <property type="resolution" value="3.50 A"/>
    <property type="chains" value="M7/m7=2-184"/>
</dbReference>
<dbReference type="PDB" id="5Z3G">
    <property type="method" value="EM"/>
    <property type="resolution" value="3.65 A"/>
    <property type="chains" value="T=1-184"/>
</dbReference>
<dbReference type="PDB" id="6C0F">
    <property type="method" value="EM"/>
    <property type="resolution" value="3.70 A"/>
    <property type="chains" value="P=1-184"/>
</dbReference>
<dbReference type="PDB" id="6CB1">
    <property type="method" value="EM"/>
    <property type="resolution" value="4.60 A"/>
    <property type="chains" value="P=1-184"/>
</dbReference>
<dbReference type="PDB" id="6ELZ">
    <property type="method" value="EM"/>
    <property type="resolution" value="3.30 A"/>
    <property type="chains" value="P=1-184"/>
</dbReference>
<dbReference type="PDB" id="6EM1">
    <property type="method" value="EM"/>
    <property type="resolution" value="3.60 A"/>
    <property type="chains" value="P=1-184"/>
</dbReference>
<dbReference type="PDB" id="6EM3">
    <property type="method" value="EM"/>
    <property type="resolution" value="3.20 A"/>
    <property type="chains" value="P=1-184"/>
</dbReference>
<dbReference type="PDB" id="6EM4">
    <property type="method" value="EM"/>
    <property type="resolution" value="4.10 A"/>
    <property type="chains" value="P=1-184"/>
</dbReference>
<dbReference type="PDB" id="6EM5">
    <property type="method" value="EM"/>
    <property type="resolution" value="4.30 A"/>
    <property type="chains" value="P=1-184"/>
</dbReference>
<dbReference type="PDB" id="6FT6">
    <property type="method" value="EM"/>
    <property type="resolution" value="3.90 A"/>
    <property type="chains" value="P=1-184"/>
</dbReference>
<dbReference type="PDB" id="6GQ1">
    <property type="method" value="EM"/>
    <property type="resolution" value="4.40 A"/>
    <property type="chains" value="P=2-184"/>
</dbReference>
<dbReference type="PDB" id="6GQB">
    <property type="method" value="EM"/>
    <property type="resolution" value="3.90 A"/>
    <property type="chains" value="P=2-184"/>
</dbReference>
<dbReference type="PDB" id="6GQV">
    <property type="method" value="EM"/>
    <property type="resolution" value="4.00 A"/>
    <property type="chains" value="P=2-184"/>
</dbReference>
<dbReference type="PDB" id="6HD7">
    <property type="method" value="EM"/>
    <property type="resolution" value="3.40 A"/>
    <property type="chains" value="R=1-184"/>
</dbReference>
<dbReference type="PDB" id="6HHQ">
    <property type="method" value="X-ray"/>
    <property type="resolution" value="3.10 A"/>
    <property type="chains" value="CR/x=1-184"/>
</dbReference>
<dbReference type="PDB" id="6I7O">
    <property type="method" value="EM"/>
    <property type="resolution" value="5.30 A"/>
    <property type="chains" value="AX/XX=1-184"/>
</dbReference>
<dbReference type="PDB" id="6M62">
    <property type="method" value="EM"/>
    <property type="resolution" value="3.20 A"/>
    <property type="chains" value="P=1-184"/>
</dbReference>
<dbReference type="PDB" id="6N8J">
    <property type="method" value="EM"/>
    <property type="resolution" value="3.50 A"/>
    <property type="chains" value="P=1-184"/>
</dbReference>
<dbReference type="PDB" id="6N8K">
    <property type="method" value="EM"/>
    <property type="resolution" value="3.60 A"/>
    <property type="chains" value="P=1-184"/>
</dbReference>
<dbReference type="PDB" id="6N8L">
    <property type="method" value="EM"/>
    <property type="resolution" value="3.60 A"/>
    <property type="chains" value="P=1-184"/>
</dbReference>
<dbReference type="PDB" id="6N8M">
    <property type="method" value="EM"/>
    <property type="resolution" value="3.50 A"/>
    <property type="chains" value="c=1-184"/>
</dbReference>
<dbReference type="PDB" id="6N8N">
    <property type="method" value="EM"/>
    <property type="resolution" value="3.80 A"/>
    <property type="chains" value="c=1-184"/>
</dbReference>
<dbReference type="PDB" id="6N8O">
    <property type="method" value="EM"/>
    <property type="resolution" value="3.50 A"/>
    <property type="chains" value="c=1-184"/>
</dbReference>
<dbReference type="PDB" id="6OIG">
    <property type="method" value="EM"/>
    <property type="resolution" value="3.80 A"/>
    <property type="chains" value="P=2-184"/>
</dbReference>
<dbReference type="PDB" id="6Q8Y">
    <property type="method" value="EM"/>
    <property type="resolution" value="3.10 A"/>
    <property type="chains" value="AX=2-184"/>
</dbReference>
<dbReference type="PDB" id="6QIK">
    <property type="method" value="EM"/>
    <property type="resolution" value="3.10 A"/>
    <property type="chains" value="U=2-155"/>
</dbReference>
<dbReference type="PDB" id="6QT0">
    <property type="method" value="EM"/>
    <property type="resolution" value="3.40 A"/>
    <property type="chains" value="U=1-184"/>
</dbReference>
<dbReference type="PDB" id="6QTZ">
    <property type="method" value="EM"/>
    <property type="resolution" value="3.50 A"/>
    <property type="chains" value="U=1-184"/>
</dbReference>
<dbReference type="PDB" id="6R84">
    <property type="method" value="EM"/>
    <property type="resolution" value="3.60 A"/>
    <property type="chains" value="5=2-184"/>
</dbReference>
<dbReference type="PDB" id="6R86">
    <property type="method" value="EM"/>
    <property type="resolution" value="3.40 A"/>
    <property type="chains" value="5=2-184"/>
</dbReference>
<dbReference type="PDB" id="6R87">
    <property type="method" value="EM"/>
    <property type="resolution" value="3.40 A"/>
    <property type="chains" value="5=2-184"/>
</dbReference>
<dbReference type="PDB" id="6RI5">
    <property type="method" value="EM"/>
    <property type="resolution" value="3.30 A"/>
    <property type="chains" value="U=1-184"/>
</dbReference>
<dbReference type="PDB" id="6RZZ">
    <property type="method" value="EM"/>
    <property type="resolution" value="3.20 A"/>
    <property type="chains" value="U=1-184"/>
</dbReference>
<dbReference type="PDB" id="6S05">
    <property type="method" value="EM"/>
    <property type="resolution" value="3.90 A"/>
    <property type="chains" value="U=1-184"/>
</dbReference>
<dbReference type="PDB" id="6S47">
    <property type="method" value="EM"/>
    <property type="resolution" value="3.28 A"/>
    <property type="chains" value="AR=2-184"/>
</dbReference>
<dbReference type="PDB" id="6SNT">
    <property type="method" value="EM"/>
    <property type="resolution" value="2.80 A"/>
    <property type="chains" value="v=1-184"/>
</dbReference>
<dbReference type="PDB" id="6SV4">
    <property type="method" value="EM"/>
    <property type="resolution" value="3.30 A"/>
    <property type="chains" value="AX/XX/zX=1-184"/>
</dbReference>
<dbReference type="PDB" id="6T4Q">
    <property type="method" value="EM"/>
    <property type="resolution" value="2.60 A"/>
    <property type="chains" value="LP=2-184"/>
</dbReference>
<dbReference type="PDB" id="6T7I">
    <property type="method" value="EM"/>
    <property type="resolution" value="3.20 A"/>
    <property type="chains" value="LP=1-184"/>
</dbReference>
<dbReference type="PDB" id="6T7T">
    <property type="method" value="EM"/>
    <property type="resolution" value="3.10 A"/>
    <property type="chains" value="LP=1-184"/>
</dbReference>
<dbReference type="PDB" id="6T83">
    <property type="method" value="EM"/>
    <property type="resolution" value="4.00 A"/>
    <property type="chains" value="A/Py=1-184"/>
</dbReference>
<dbReference type="PDB" id="6TB3">
    <property type="method" value="EM"/>
    <property type="resolution" value="2.80 A"/>
    <property type="chains" value="AX=2-184"/>
</dbReference>
<dbReference type="PDB" id="6TNU">
    <property type="method" value="EM"/>
    <property type="resolution" value="3.10 A"/>
    <property type="chains" value="AX=2-184"/>
</dbReference>
<dbReference type="PDB" id="6WOO">
    <property type="method" value="EM"/>
    <property type="resolution" value="2.90 A"/>
    <property type="chains" value="P=3-182"/>
</dbReference>
<dbReference type="PDB" id="6XIQ">
    <property type="method" value="EM"/>
    <property type="resolution" value="4.20 A"/>
    <property type="chains" value="P=1-184"/>
</dbReference>
<dbReference type="PDB" id="6XIR">
    <property type="method" value="EM"/>
    <property type="resolution" value="3.20 A"/>
    <property type="chains" value="P=1-184"/>
</dbReference>
<dbReference type="PDB" id="6YLG">
    <property type="method" value="EM"/>
    <property type="resolution" value="3.00 A"/>
    <property type="chains" value="P=1-184"/>
</dbReference>
<dbReference type="PDB" id="6YLH">
    <property type="method" value="EM"/>
    <property type="resolution" value="3.10 A"/>
    <property type="chains" value="P=1-184"/>
</dbReference>
<dbReference type="PDB" id="6YLX">
    <property type="method" value="EM"/>
    <property type="resolution" value="3.90 A"/>
    <property type="chains" value="P=1-184"/>
</dbReference>
<dbReference type="PDB" id="6YLY">
    <property type="method" value="EM"/>
    <property type="resolution" value="3.80 A"/>
    <property type="chains" value="P=1-184"/>
</dbReference>
<dbReference type="PDB" id="6Z6J">
    <property type="method" value="EM"/>
    <property type="resolution" value="3.40 A"/>
    <property type="chains" value="LP=1-184"/>
</dbReference>
<dbReference type="PDB" id="6Z6K">
    <property type="method" value="EM"/>
    <property type="resolution" value="3.40 A"/>
    <property type="chains" value="LP=1-184"/>
</dbReference>
<dbReference type="PDB" id="7AZY">
    <property type="method" value="EM"/>
    <property type="resolution" value="2.88 A"/>
    <property type="chains" value="y=1-184"/>
</dbReference>
<dbReference type="PDB" id="7B7D">
    <property type="method" value="EM"/>
    <property type="resolution" value="3.30 A"/>
    <property type="chains" value="LR=2-184"/>
</dbReference>
<dbReference type="PDB" id="7BT6">
    <property type="method" value="EM"/>
    <property type="resolution" value="3.12 A"/>
    <property type="chains" value="P=1-184"/>
</dbReference>
<dbReference type="PDB" id="7BTB">
    <property type="method" value="EM"/>
    <property type="resolution" value="3.22 A"/>
    <property type="chains" value="P=1-184"/>
</dbReference>
<dbReference type="PDB" id="7MPI">
    <property type="method" value="EM"/>
    <property type="resolution" value="3.05 A"/>
    <property type="chains" value="AP=2-184"/>
</dbReference>
<dbReference type="PDB" id="7MPJ">
    <property type="method" value="EM"/>
    <property type="resolution" value="2.70 A"/>
    <property type="chains" value="AP=2-184"/>
</dbReference>
<dbReference type="PDB" id="7N8B">
    <property type="method" value="EM"/>
    <property type="resolution" value="3.05 A"/>
    <property type="chains" value="AP=2-184"/>
</dbReference>
<dbReference type="PDB" id="7NAC">
    <property type="method" value="EM"/>
    <property type="resolution" value="3.04 A"/>
    <property type="chains" value="P=1-184"/>
</dbReference>
<dbReference type="PDB" id="7NAD">
    <property type="method" value="EM"/>
    <property type="resolution" value="3.04 A"/>
    <property type="chains" value="P=1-184"/>
</dbReference>
<dbReference type="PDB" id="7NRC">
    <property type="method" value="EM"/>
    <property type="resolution" value="3.90 A"/>
    <property type="chains" value="LR=2-184"/>
</dbReference>
<dbReference type="PDB" id="7NRD">
    <property type="method" value="EM"/>
    <property type="resolution" value="4.36 A"/>
    <property type="chains" value="LR=2-184"/>
</dbReference>
<dbReference type="PDB" id="7OF1">
    <property type="method" value="EM"/>
    <property type="resolution" value="3.10 A"/>
    <property type="chains" value="P=1-184"/>
</dbReference>
<dbReference type="PDB" id="7OH3">
    <property type="method" value="EM"/>
    <property type="resolution" value="3.40 A"/>
    <property type="chains" value="P=1-184"/>
</dbReference>
<dbReference type="PDB" id="7OHP">
    <property type="method" value="EM"/>
    <property type="resolution" value="3.90 A"/>
    <property type="chains" value="P=1-184"/>
</dbReference>
<dbReference type="PDB" id="7OHQ">
    <property type="method" value="EM"/>
    <property type="resolution" value="3.10 A"/>
    <property type="chains" value="P=1-184"/>
</dbReference>
<dbReference type="PDB" id="7OHR">
    <property type="method" value="EM"/>
    <property type="resolution" value="4.72 A"/>
    <property type="chains" value="P=1-184"/>
</dbReference>
<dbReference type="PDB" id="7OHS">
    <property type="method" value="EM"/>
    <property type="resolution" value="4.38 A"/>
    <property type="chains" value="P=1-184"/>
</dbReference>
<dbReference type="PDB" id="7OHU">
    <property type="method" value="EM"/>
    <property type="resolution" value="3.70 A"/>
    <property type="chains" value="P=1-184"/>
</dbReference>
<dbReference type="PDB" id="7OHV">
    <property type="method" value="EM"/>
    <property type="resolution" value="3.90 A"/>
    <property type="chains" value="P=1-184"/>
</dbReference>
<dbReference type="PDB" id="7OHW">
    <property type="method" value="EM"/>
    <property type="resolution" value="3.50 A"/>
    <property type="chains" value="P=1-184"/>
</dbReference>
<dbReference type="PDB" id="7OHX">
    <property type="method" value="EM"/>
    <property type="resolution" value="3.30 A"/>
    <property type="chains" value="P=1-184"/>
</dbReference>
<dbReference type="PDB" id="7OHY">
    <property type="method" value="EM"/>
    <property type="resolution" value="3.90 A"/>
    <property type="chains" value="P=1-184"/>
</dbReference>
<dbReference type="PDB" id="7R72">
    <property type="method" value="EM"/>
    <property type="resolution" value="3.07 A"/>
    <property type="chains" value="P=1-184"/>
</dbReference>
<dbReference type="PDB" id="7R7A">
    <property type="method" value="EM"/>
    <property type="resolution" value="3.04 A"/>
    <property type="chains" value="P=1-184"/>
</dbReference>
<dbReference type="PDB" id="7TOO">
    <property type="method" value="EM"/>
    <property type="resolution" value="2.70 A"/>
    <property type="chains" value="AL17=1-184"/>
</dbReference>
<dbReference type="PDB" id="7TOP">
    <property type="method" value="EM"/>
    <property type="resolution" value="2.40 A"/>
    <property type="chains" value="AL17=1-184"/>
</dbReference>
<dbReference type="PDB" id="7U0H">
    <property type="method" value="EM"/>
    <property type="resolution" value="2.76 A"/>
    <property type="chains" value="P=1-184"/>
</dbReference>
<dbReference type="PDB" id="7UG6">
    <property type="method" value="EM"/>
    <property type="resolution" value="2.90 A"/>
    <property type="chains" value="P=1-184"/>
</dbReference>
<dbReference type="PDB" id="7UOO">
    <property type="method" value="EM"/>
    <property type="resolution" value="2.34 A"/>
    <property type="chains" value="P=1-184"/>
</dbReference>
<dbReference type="PDB" id="7UQB">
    <property type="method" value="EM"/>
    <property type="resolution" value="2.43 A"/>
    <property type="chains" value="P=1-184"/>
</dbReference>
<dbReference type="PDB" id="7UQZ">
    <property type="method" value="EM"/>
    <property type="resolution" value="2.44 A"/>
    <property type="chains" value="P=2-184"/>
</dbReference>
<dbReference type="PDB" id="7V08">
    <property type="method" value="EM"/>
    <property type="resolution" value="2.36 A"/>
    <property type="chains" value="P=1-184"/>
</dbReference>
<dbReference type="PDB" id="7Z34">
    <property type="method" value="EM"/>
    <property type="resolution" value="3.80 A"/>
    <property type="chains" value="P=1-184"/>
</dbReference>
<dbReference type="PDB" id="7ZPQ">
    <property type="method" value="EM"/>
    <property type="resolution" value="3.47 A"/>
    <property type="chains" value="BO=2-184"/>
</dbReference>
<dbReference type="PDB" id="7ZRS">
    <property type="method" value="EM"/>
    <property type="resolution" value="4.80 A"/>
    <property type="chains" value="BO=2-184"/>
</dbReference>
<dbReference type="PDB" id="7ZS5">
    <property type="method" value="EM"/>
    <property type="resolution" value="3.20 A"/>
    <property type="chains" value="BQ=2-184"/>
</dbReference>
<dbReference type="PDB" id="7ZUW">
    <property type="method" value="EM"/>
    <property type="resolution" value="4.30 A"/>
    <property type="chains" value="BO=2-184"/>
</dbReference>
<dbReference type="PDB" id="7ZUX">
    <property type="method" value="EM"/>
    <property type="resolution" value="2.50 A"/>
    <property type="chains" value="EO=2-184"/>
</dbReference>
<dbReference type="PDB" id="7ZW0">
    <property type="method" value="EM"/>
    <property type="resolution" value="2.40 A"/>
    <property type="chains" value="LS=1-184"/>
</dbReference>
<dbReference type="PDB" id="8AAF">
    <property type="method" value="EM"/>
    <property type="resolution" value="2.50 A"/>
    <property type="chains" value="C=1-184"/>
</dbReference>
<dbReference type="PDB" id="8AGT">
    <property type="method" value="EM"/>
    <property type="resolution" value="2.60 A"/>
    <property type="chains" value="C=1-184"/>
</dbReference>
<dbReference type="PDB" id="8AGU">
    <property type="method" value="EM"/>
    <property type="resolution" value="2.70 A"/>
    <property type="chains" value="C=1-184"/>
</dbReference>
<dbReference type="PDB" id="8AGV">
    <property type="method" value="EM"/>
    <property type="resolution" value="2.60 A"/>
    <property type="chains" value="C=1-184"/>
</dbReference>
<dbReference type="PDB" id="8AGW">
    <property type="method" value="EM"/>
    <property type="resolution" value="2.60 A"/>
    <property type="chains" value="C=1-184"/>
</dbReference>
<dbReference type="PDB" id="8AGX">
    <property type="method" value="EM"/>
    <property type="resolution" value="2.40 A"/>
    <property type="chains" value="C=1-184"/>
</dbReference>
<dbReference type="PDB" id="8AGZ">
    <property type="method" value="EM"/>
    <property type="resolution" value="2.60 A"/>
    <property type="chains" value="C=1-184"/>
</dbReference>
<dbReference type="PDB" id="8BIP">
    <property type="method" value="EM"/>
    <property type="resolution" value="3.10 A"/>
    <property type="chains" value="LP=2-184"/>
</dbReference>
<dbReference type="PDB" id="8BJQ">
    <property type="method" value="EM"/>
    <property type="resolution" value="3.80 A"/>
    <property type="chains" value="LP=2-184"/>
</dbReference>
<dbReference type="PDB" id="8BN3">
    <property type="method" value="EM"/>
    <property type="resolution" value="2.40 A"/>
    <property type="chains" value="M7=2-184"/>
</dbReference>
<dbReference type="PDB" id="8BQD">
    <property type="method" value="EM"/>
    <property type="resolution" value="3.90 A"/>
    <property type="chains" value="AX=2-184"/>
</dbReference>
<dbReference type="PDB" id="8BQX">
    <property type="method" value="EM"/>
    <property type="resolution" value="3.80 A"/>
    <property type="chains" value="AX=2-184"/>
</dbReference>
<dbReference type="PDB" id="8CCS">
    <property type="method" value="EM"/>
    <property type="resolution" value="1.97 A"/>
    <property type="chains" value="B=1-184"/>
</dbReference>
<dbReference type="PDB" id="8CDL">
    <property type="method" value="EM"/>
    <property type="resolution" value="2.72 A"/>
    <property type="chains" value="B=1-184"/>
</dbReference>
<dbReference type="PDB" id="8CDR">
    <property type="method" value="EM"/>
    <property type="resolution" value="2.04 A"/>
    <property type="chains" value="B=1-184"/>
</dbReference>
<dbReference type="PDB" id="8CEH">
    <property type="method" value="EM"/>
    <property type="resolution" value="2.05 A"/>
    <property type="chains" value="B=1-184"/>
</dbReference>
<dbReference type="PDB" id="8CF5">
    <property type="method" value="EM"/>
    <property type="resolution" value="2.71 A"/>
    <property type="chains" value="B=1-184"/>
</dbReference>
<dbReference type="PDB" id="8CG8">
    <property type="method" value="EM"/>
    <property type="resolution" value="2.57 A"/>
    <property type="chains" value="B=1-184"/>
</dbReference>
<dbReference type="PDB" id="8CIV">
    <property type="method" value="EM"/>
    <property type="resolution" value="2.47 A"/>
    <property type="chains" value="B=1-184"/>
</dbReference>
<dbReference type="PDB" id="8CKU">
    <property type="method" value="EM"/>
    <property type="resolution" value="3.11 A"/>
    <property type="chains" value="B=1-184"/>
</dbReference>
<dbReference type="PDB" id="8CMJ">
    <property type="method" value="EM"/>
    <property type="resolution" value="3.79 A"/>
    <property type="chains" value="B=1-184"/>
</dbReference>
<dbReference type="PDB" id="8EUB">
    <property type="method" value="EM"/>
    <property type="resolution" value="2.52 A"/>
    <property type="chains" value="AP=1-184"/>
</dbReference>
<dbReference type="PDB" id="8EVP">
    <property type="method" value="EM"/>
    <property type="resolution" value="2.38 A"/>
    <property type="chains" value="AP=1-184"/>
</dbReference>
<dbReference type="PDB" id="8EVQ">
    <property type="method" value="EM"/>
    <property type="resolution" value="2.72 A"/>
    <property type="chains" value="AP=1-184"/>
</dbReference>
<dbReference type="PDB" id="8EVR">
    <property type="method" value="EM"/>
    <property type="resolution" value="2.87 A"/>
    <property type="chains" value="AP=1-184"/>
</dbReference>
<dbReference type="PDB" id="8EVS">
    <property type="method" value="EM"/>
    <property type="resolution" value="2.62 A"/>
    <property type="chains" value="AP=1-184"/>
</dbReference>
<dbReference type="PDB" id="8EVT">
    <property type="method" value="EM"/>
    <property type="resolution" value="2.20 A"/>
    <property type="chains" value="AP=1-184"/>
</dbReference>
<dbReference type="PDB" id="8EWB">
    <property type="method" value="EM"/>
    <property type="resolution" value="2.87 A"/>
    <property type="chains" value="AP=1-184"/>
</dbReference>
<dbReference type="PDB" id="8EWC">
    <property type="method" value="EM"/>
    <property type="resolution" value="2.45 A"/>
    <property type="chains" value="AP=1-184"/>
</dbReference>
<dbReference type="PDB" id="8HFR">
    <property type="method" value="EM"/>
    <property type="resolution" value="2.64 A"/>
    <property type="chains" value="Pv=1-184"/>
</dbReference>
<dbReference type="PDB" id="8K2D">
    <property type="method" value="EM"/>
    <property type="resolution" value="3.20 A"/>
    <property type="chains" value="LP=1-184"/>
</dbReference>
<dbReference type="PDB" id="8K82">
    <property type="method" value="EM"/>
    <property type="resolution" value="3.00 A"/>
    <property type="chains" value="LP=1-184"/>
</dbReference>
<dbReference type="PDB" id="8P4V">
    <property type="method" value="X-ray"/>
    <property type="resolution" value="3.16 A"/>
    <property type="chains" value="CR/x=1-184"/>
</dbReference>
<dbReference type="PDB" id="8P8M">
    <property type="method" value="EM"/>
    <property type="resolution" value="2.66 A"/>
    <property type="chains" value="QO=1-184"/>
</dbReference>
<dbReference type="PDB" id="8P8N">
    <property type="method" value="EM"/>
    <property type="resolution" value="2.15 A"/>
    <property type="chains" value="QO=1-184"/>
</dbReference>
<dbReference type="PDB" id="8P8U">
    <property type="method" value="EM"/>
    <property type="resolution" value="2.23 A"/>
    <property type="chains" value="QO=1-184"/>
</dbReference>
<dbReference type="PDB" id="8P9A">
    <property type="method" value="X-ray"/>
    <property type="resolution" value="2.90 A"/>
    <property type="chains" value="CR/x=1-184"/>
</dbReference>
<dbReference type="PDB" id="8PFR">
    <property type="method" value="EM"/>
    <property type="resolution" value="2.15 A"/>
    <property type="chains" value="QO=1-184"/>
</dbReference>
<dbReference type="PDB" id="8T2X">
    <property type="method" value="EM"/>
    <property type="resolution" value="2.46 A"/>
    <property type="chains" value="AP=1-184"/>
</dbReference>
<dbReference type="PDB" id="8T2Y">
    <property type="method" value="EM"/>
    <property type="resolution" value="2.20 A"/>
    <property type="chains" value="AP=1-184"/>
</dbReference>
<dbReference type="PDB" id="8T2Z">
    <property type="method" value="EM"/>
    <property type="resolution" value="2.40 A"/>
    <property type="chains" value="AP=1-184"/>
</dbReference>
<dbReference type="PDB" id="8T30">
    <property type="method" value="EM"/>
    <property type="resolution" value="2.88 A"/>
    <property type="chains" value="AP=1-184"/>
</dbReference>
<dbReference type="PDB" id="8T3A">
    <property type="method" value="EM"/>
    <property type="resolution" value="2.86 A"/>
    <property type="chains" value="AP=1-184"/>
</dbReference>
<dbReference type="PDB" id="8T3B">
    <property type="method" value="EM"/>
    <property type="resolution" value="3.08 A"/>
    <property type="chains" value="AP=1-184"/>
</dbReference>
<dbReference type="PDB" id="8T3C">
    <property type="method" value="EM"/>
    <property type="resolution" value="3.86 A"/>
    <property type="chains" value="AP=1-184"/>
</dbReference>
<dbReference type="PDB" id="8T3D">
    <property type="method" value="EM"/>
    <property type="resolution" value="2.95 A"/>
    <property type="chains" value="AP=1-184"/>
</dbReference>
<dbReference type="PDB" id="8T3E">
    <property type="method" value="EM"/>
    <property type="resolution" value="3.04 A"/>
    <property type="chains" value="AP=1-184"/>
</dbReference>
<dbReference type="PDB" id="8T3F">
    <property type="method" value="EM"/>
    <property type="resolution" value="3.09 A"/>
    <property type="chains" value="AP=1-184"/>
</dbReference>
<dbReference type="PDB" id="8UT0">
    <property type="method" value="EM"/>
    <property type="resolution" value="3.22 A"/>
    <property type="chains" value="LR=2-184"/>
</dbReference>
<dbReference type="PDB" id="8UTI">
    <property type="method" value="EM"/>
    <property type="resolution" value="3.13 A"/>
    <property type="chains" value="LR=2-184"/>
</dbReference>
<dbReference type="PDB" id="8V83">
    <property type="method" value="EM"/>
    <property type="resolution" value="2.53 A"/>
    <property type="chains" value="P=1-184"/>
</dbReference>
<dbReference type="PDB" id="8V84">
    <property type="method" value="EM"/>
    <property type="resolution" value="2.70 A"/>
    <property type="chains" value="P=1-184"/>
</dbReference>
<dbReference type="PDB" id="8V87">
    <property type="method" value="EM"/>
    <property type="resolution" value="2.66 A"/>
    <property type="chains" value="P=1-184"/>
</dbReference>
<dbReference type="PDB" id="8XU8">
    <property type="method" value="EM"/>
    <property type="resolution" value="3.40 A"/>
    <property type="chains" value="R=2-184"/>
</dbReference>
<dbReference type="PDB" id="8Y0U">
    <property type="method" value="EM"/>
    <property type="resolution" value="3.59 A"/>
    <property type="chains" value="LP=1-184"/>
</dbReference>
<dbReference type="PDB" id="8YLD">
    <property type="method" value="EM"/>
    <property type="resolution" value="3.90 A"/>
    <property type="chains" value="R=2-184"/>
</dbReference>
<dbReference type="PDB" id="8YLR">
    <property type="method" value="EM"/>
    <property type="resolution" value="3.90 A"/>
    <property type="chains" value="R=2-184"/>
</dbReference>
<dbReference type="PDB" id="8Z70">
    <property type="method" value="EM"/>
    <property type="resolution" value="3.20 A"/>
    <property type="chains" value="R=2-184"/>
</dbReference>
<dbReference type="PDB" id="8Z71">
    <property type="method" value="EM"/>
    <property type="resolution" value="3.60 A"/>
    <property type="chains" value="R=2-184"/>
</dbReference>
<dbReference type="PDB" id="9F9S">
    <property type="method" value="EM"/>
    <property type="resolution" value="2.90 A"/>
    <property type="chains" value="LK/MK=1-184"/>
</dbReference>
<dbReference type="PDBsum" id="2WW9"/>
<dbReference type="PDBsum" id="2WWA"/>
<dbReference type="PDBsum" id="2WWB"/>
<dbReference type="PDBsum" id="3J6X"/>
<dbReference type="PDBsum" id="3J6Y"/>
<dbReference type="PDBsum" id="3J77"/>
<dbReference type="PDBsum" id="3J78"/>
<dbReference type="PDBsum" id="3JCT"/>
<dbReference type="PDBsum" id="4U3M"/>
<dbReference type="PDBsum" id="4U3N"/>
<dbReference type="PDBsum" id="4U3U"/>
<dbReference type="PDBsum" id="4U4N"/>
<dbReference type="PDBsum" id="4U4O"/>
<dbReference type="PDBsum" id="4U4Q"/>
<dbReference type="PDBsum" id="4U4R"/>
<dbReference type="PDBsum" id="4U4U"/>
<dbReference type="PDBsum" id="4U4Y"/>
<dbReference type="PDBsum" id="4U4Z"/>
<dbReference type="PDBsum" id="4U50"/>
<dbReference type="PDBsum" id="4U51"/>
<dbReference type="PDBsum" id="4U52"/>
<dbReference type="PDBsum" id="4U53"/>
<dbReference type="PDBsum" id="4U55"/>
<dbReference type="PDBsum" id="4U56"/>
<dbReference type="PDBsum" id="4U6F"/>
<dbReference type="PDBsum" id="4V4B"/>
<dbReference type="PDBsum" id="4V5Z"/>
<dbReference type="PDBsum" id="4V6I"/>
<dbReference type="PDBsum" id="4V7F"/>
<dbReference type="PDBsum" id="4V7R"/>
<dbReference type="PDBsum" id="4V88"/>
<dbReference type="PDBsum" id="4V8T"/>
<dbReference type="PDBsum" id="4V8Y"/>
<dbReference type="PDBsum" id="4V8Z"/>
<dbReference type="PDBsum" id="4V91"/>
<dbReference type="PDBsum" id="5APN"/>
<dbReference type="PDBsum" id="5APO"/>
<dbReference type="PDBsum" id="5DAT"/>
<dbReference type="PDBsum" id="5DC3"/>
<dbReference type="PDBsum" id="5DGE"/>
<dbReference type="PDBsum" id="5DGF"/>
<dbReference type="PDBsum" id="5DGV"/>
<dbReference type="PDBsum" id="5FCI"/>
<dbReference type="PDBsum" id="5FCJ"/>
<dbReference type="PDBsum" id="5GAK"/>
<dbReference type="PDBsum" id="5H4P"/>
<dbReference type="PDBsum" id="5I4L"/>
<dbReference type="PDBsum" id="5JCS"/>
<dbReference type="PDBsum" id="5JUO"/>
<dbReference type="PDBsum" id="5JUP"/>
<dbReference type="PDBsum" id="5JUS"/>
<dbReference type="PDBsum" id="5JUT"/>
<dbReference type="PDBsum" id="5JUU"/>
<dbReference type="PDBsum" id="5LYB"/>
<dbReference type="PDBsum" id="5M1J"/>
<dbReference type="PDBsum" id="5MC6"/>
<dbReference type="PDBsum" id="5MEI"/>
<dbReference type="PDBsum" id="5NDG"/>
<dbReference type="PDBsum" id="5NDV"/>
<dbReference type="PDBsum" id="5NDW"/>
<dbReference type="PDBsum" id="5OBM"/>
<dbReference type="PDBsum" id="5ON6"/>
<dbReference type="PDBsum" id="5T62"/>
<dbReference type="PDBsum" id="5T6R"/>
<dbReference type="PDBsum" id="5TBW"/>
<dbReference type="PDBsum" id="5TGA"/>
<dbReference type="PDBsum" id="5TGM"/>
<dbReference type="PDBsum" id="5Z3G"/>
<dbReference type="PDBsum" id="6C0F"/>
<dbReference type="PDBsum" id="6CB1"/>
<dbReference type="PDBsum" id="6ELZ"/>
<dbReference type="PDBsum" id="6EM1"/>
<dbReference type="PDBsum" id="6EM3"/>
<dbReference type="PDBsum" id="6EM4"/>
<dbReference type="PDBsum" id="6EM5"/>
<dbReference type="PDBsum" id="6FT6"/>
<dbReference type="PDBsum" id="6GQ1"/>
<dbReference type="PDBsum" id="6GQB"/>
<dbReference type="PDBsum" id="6GQV"/>
<dbReference type="PDBsum" id="6HD7"/>
<dbReference type="PDBsum" id="6HHQ"/>
<dbReference type="PDBsum" id="6I7O"/>
<dbReference type="PDBsum" id="6M62"/>
<dbReference type="PDBsum" id="6N8J"/>
<dbReference type="PDBsum" id="6N8K"/>
<dbReference type="PDBsum" id="6N8L"/>
<dbReference type="PDBsum" id="6N8M"/>
<dbReference type="PDBsum" id="6N8N"/>
<dbReference type="PDBsum" id="6N8O"/>
<dbReference type="PDBsum" id="6OIG"/>
<dbReference type="PDBsum" id="6Q8Y"/>
<dbReference type="PDBsum" id="6QIK"/>
<dbReference type="PDBsum" id="6QT0"/>
<dbReference type="PDBsum" id="6QTZ"/>
<dbReference type="PDBsum" id="6R84"/>
<dbReference type="PDBsum" id="6R86"/>
<dbReference type="PDBsum" id="6R87"/>
<dbReference type="PDBsum" id="6RI5"/>
<dbReference type="PDBsum" id="6RZZ"/>
<dbReference type="PDBsum" id="6S05"/>
<dbReference type="PDBsum" id="6S47"/>
<dbReference type="PDBsum" id="6SNT"/>
<dbReference type="PDBsum" id="6SV4"/>
<dbReference type="PDBsum" id="6T4Q"/>
<dbReference type="PDBsum" id="6T7I"/>
<dbReference type="PDBsum" id="6T7T"/>
<dbReference type="PDBsum" id="6T83"/>
<dbReference type="PDBsum" id="6TB3"/>
<dbReference type="PDBsum" id="6TNU"/>
<dbReference type="PDBsum" id="6WOO"/>
<dbReference type="PDBsum" id="6XIQ"/>
<dbReference type="PDBsum" id="6XIR"/>
<dbReference type="PDBsum" id="6YLG"/>
<dbReference type="PDBsum" id="6YLH"/>
<dbReference type="PDBsum" id="6YLX"/>
<dbReference type="PDBsum" id="6YLY"/>
<dbReference type="PDBsum" id="6Z6J"/>
<dbReference type="PDBsum" id="6Z6K"/>
<dbReference type="PDBsum" id="7AZY"/>
<dbReference type="PDBsum" id="7B7D"/>
<dbReference type="PDBsum" id="7BT6"/>
<dbReference type="PDBsum" id="7BTB"/>
<dbReference type="PDBsum" id="7MPI"/>
<dbReference type="PDBsum" id="7MPJ"/>
<dbReference type="PDBsum" id="7N8B"/>
<dbReference type="PDBsum" id="7NAC"/>
<dbReference type="PDBsum" id="7NAD"/>
<dbReference type="PDBsum" id="7NRC"/>
<dbReference type="PDBsum" id="7NRD"/>
<dbReference type="PDBsum" id="7OF1"/>
<dbReference type="PDBsum" id="7OH3"/>
<dbReference type="PDBsum" id="7OHP"/>
<dbReference type="PDBsum" id="7OHQ"/>
<dbReference type="PDBsum" id="7OHR"/>
<dbReference type="PDBsum" id="7OHS"/>
<dbReference type="PDBsum" id="7OHU"/>
<dbReference type="PDBsum" id="7OHV"/>
<dbReference type="PDBsum" id="7OHW"/>
<dbReference type="PDBsum" id="7OHX"/>
<dbReference type="PDBsum" id="7OHY"/>
<dbReference type="PDBsum" id="7R72"/>
<dbReference type="PDBsum" id="7R7A"/>
<dbReference type="PDBsum" id="7TOO"/>
<dbReference type="PDBsum" id="7TOP"/>
<dbReference type="PDBsum" id="7U0H"/>
<dbReference type="PDBsum" id="7UG6"/>
<dbReference type="PDBsum" id="7UOO"/>
<dbReference type="PDBsum" id="7UQB"/>
<dbReference type="PDBsum" id="7UQZ"/>
<dbReference type="PDBsum" id="7V08"/>
<dbReference type="PDBsum" id="7Z34"/>
<dbReference type="PDBsum" id="7ZPQ"/>
<dbReference type="PDBsum" id="7ZRS"/>
<dbReference type="PDBsum" id="7ZS5"/>
<dbReference type="PDBsum" id="7ZUW"/>
<dbReference type="PDBsum" id="7ZUX"/>
<dbReference type="PDBsum" id="7ZW0"/>
<dbReference type="PDBsum" id="8AAF"/>
<dbReference type="PDBsum" id="8AGT"/>
<dbReference type="PDBsum" id="8AGU"/>
<dbReference type="PDBsum" id="8AGV"/>
<dbReference type="PDBsum" id="8AGW"/>
<dbReference type="PDBsum" id="8AGX"/>
<dbReference type="PDBsum" id="8AGZ"/>
<dbReference type="PDBsum" id="8BIP"/>
<dbReference type="PDBsum" id="8BJQ"/>
<dbReference type="PDBsum" id="8BN3"/>
<dbReference type="PDBsum" id="8BQD"/>
<dbReference type="PDBsum" id="8BQX"/>
<dbReference type="PDBsum" id="8CCS"/>
<dbReference type="PDBsum" id="8CDL"/>
<dbReference type="PDBsum" id="8CDR"/>
<dbReference type="PDBsum" id="8CEH"/>
<dbReference type="PDBsum" id="8CF5"/>
<dbReference type="PDBsum" id="8CG8"/>
<dbReference type="PDBsum" id="8CIV"/>
<dbReference type="PDBsum" id="8CKU"/>
<dbReference type="PDBsum" id="8CMJ"/>
<dbReference type="PDBsum" id="8EUB"/>
<dbReference type="PDBsum" id="8EVP"/>
<dbReference type="PDBsum" id="8EVQ"/>
<dbReference type="PDBsum" id="8EVR"/>
<dbReference type="PDBsum" id="8EVS"/>
<dbReference type="PDBsum" id="8EVT"/>
<dbReference type="PDBsum" id="8EWB"/>
<dbReference type="PDBsum" id="8EWC"/>
<dbReference type="PDBsum" id="8HFR"/>
<dbReference type="PDBsum" id="8K2D"/>
<dbReference type="PDBsum" id="8K82"/>
<dbReference type="PDBsum" id="8P4V"/>
<dbReference type="PDBsum" id="8P8M"/>
<dbReference type="PDBsum" id="8P8N"/>
<dbReference type="PDBsum" id="8P8U"/>
<dbReference type="PDBsum" id="8P9A"/>
<dbReference type="PDBsum" id="8PFR"/>
<dbReference type="PDBsum" id="8T2X"/>
<dbReference type="PDBsum" id="8T2Y"/>
<dbReference type="PDBsum" id="8T2Z"/>
<dbReference type="PDBsum" id="8T30"/>
<dbReference type="PDBsum" id="8T3A"/>
<dbReference type="PDBsum" id="8T3B"/>
<dbReference type="PDBsum" id="8T3C"/>
<dbReference type="PDBsum" id="8T3D"/>
<dbReference type="PDBsum" id="8T3E"/>
<dbReference type="PDBsum" id="8T3F"/>
<dbReference type="PDBsum" id="8UT0"/>
<dbReference type="PDBsum" id="8UTI"/>
<dbReference type="PDBsum" id="8V83"/>
<dbReference type="PDBsum" id="8V84"/>
<dbReference type="PDBsum" id="8V87"/>
<dbReference type="PDBsum" id="8XU8"/>
<dbReference type="PDBsum" id="8Y0U"/>
<dbReference type="PDBsum" id="8YLD"/>
<dbReference type="PDBsum" id="8YLR"/>
<dbReference type="PDBsum" id="8Z70"/>
<dbReference type="PDBsum" id="8Z71"/>
<dbReference type="PDBsum" id="9F9S"/>
<dbReference type="EMDB" id="EMD-0047"/>
<dbReference type="EMDB" id="EMD-0048"/>
<dbReference type="EMDB" id="EMD-0049"/>
<dbReference type="EMDB" id="EMD-0202"/>
<dbReference type="EMDB" id="EMD-0369"/>
<dbReference type="EMDB" id="EMD-0370"/>
<dbReference type="EMDB" id="EMD-0371"/>
<dbReference type="EMDB" id="EMD-0372"/>
<dbReference type="EMDB" id="EMD-0373"/>
<dbReference type="EMDB" id="EMD-0374"/>
<dbReference type="EMDB" id="EMD-10068"/>
<dbReference type="EMDB" id="EMD-10071"/>
<dbReference type="EMDB" id="EMD-10098"/>
<dbReference type="EMDB" id="EMD-10262"/>
<dbReference type="EMDB" id="EMD-10315"/>
<dbReference type="EMDB" id="EMD-10377"/>
<dbReference type="EMDB" id="EMD-10396"/>
<dbReference type="EMDB" id="EMD-10397"/>
<dbReference type="EMDB" id="EMD-10398"/>
<dbReference type="EMDB" id="EMD-10431"/>
<dbReference type="EMDB" id="EMD-10537"/>
<dbReference type="EMDB" id="EMD-10838"/>
<dbReference type="EMDB" id="EMD-10839"/>
<dbReference type="EMDB" id="EMD-10841"/>
<dbReference type="EMDB" id="EMD-10842"/>
<dbReference type="EMDB" id="EMD-11096"/>
<dbReference type="EMDB" id="EMD-11097"/>
<dbReference type="EMDB" id="EMD-11951"/>
<dbReference type="EMDB" id="EMD-12081"/>
<dbReference type="EMDB" id="EMD-12534"/>
<dbReference type="EMDB" id="EMD-12535"/>
<dbReference type="EMDB" id="EMD-12866"/>
<dbReference type="EMDB" id="EMD-12892"/>
<dbReference type="EMDB" id="EMD-12904"/>
<dbReference type="EMDB" id="EMD-12905"/>
<dbReference type="EMDB" id="EMD-12906"/>
<dbReference type="EMDB" id="EMD-12907"/>
<dbReference type="EMDB" id="EMD-12909"/>
<dbReference type="EMDB" id="EMD-12910"/>
<dbReference type="EMDB" id="EMD-12911"/>
<dbReference type="EMDB" id="EMD-12912"/>
<dbReference type="EMDB" id="EMD-12913"/>
<dbReference type="EMDB" id="EMD-14471"/>
<dbReference type="EMDB" id="EMD-14861"/>
<dbReference type="EMDB" id="EMD-14921"/>
<dbReference type="EMDB" id="EMD-14926"/>
<dbReference type="EMDB" id="EMD-14978"/>
<dbReference type="EMDB" id="EMD-14979"/>
<dbReference type="EMDB" id="EMD-14990"/>
<dbReference type="EMDB" id="EMD-15296"/>
<dbReference type="EMDB" id="EMD-15423"/>
<dbReference type="EMDB" id="EMD-15424"/>
<dbReference type="EMDB" id="EMD-15425"/>
<dbReference type="EMDB" id="EMD-15426"/>
<dbReference type="EMDB" id="EMD-15427"/>
<dbReference type="EMDB" id="EMD-15428"/>
<dbReference type="EMDB" id="EMD-16086"/>
<dbReference type="EMDB" id="EMD-16090"/>
<dbReference type="EMDB" id="EMD-16127"/>
<dbReference type="EMDB" id="EMD-16182"/>
<dbReference type="EMDB" id="EMD-16191"/>
<dbReference type="EMDB" id="EMD-16563"/>
<dbReference type="EMDB" id="EMD-16591"/>
<dbReference type="EMDB" id="EMD-16594"/>
<dbReference type="EMDB" id="EMD-16609"/>
<dbReference type="EMDB" id="EMD-16616"/>
<dbReference type="EMDB" id="EMD-16634"/>
<dbReference type="EMDB" id="EMD-16684"/>
<dbReference type="EMDB" id="EMD-16702"/>
<dbReference type="EMDB" id="EMD-16729"/>
<dbReference type="EMDB" id="EMD-17549"/>
<dbReference type="EMDB" id="EMD-17550"/>
<dbReference type="EMDB" id="EMD-17552"/>
<dbReference type="EMDB" id="EMD-17653"/>
<dbReference type="EMDB" id="EMD-20077"/>
<dbReference type="EMDB" id="EMD-21859"/>
<dbReference type="EMDB" id="EMD-22196"/>
<dbReference type="EMDB" id="EMD-22198"/>
<dbReference type="EMDB" id="EMD-23934"/>
<dbReference type="EMDB" id="EMD-23935"/>
<dbReference type="EMDB" id="EMD-24235"/>
<dbReference type="EMDB" id="EMD-24269"/>
<dbReference type="EMDB" id="EMD-24270"/>
<dbReference type="EMDB" id="EMD-24290"/>
<dbReference type="EMDB" id="EMD-24296"/>
<dbReference type="EMDB" id="EMD-26033"/>
<dbReference type="EMDB" id="EMD-26034"/>
<dbReference type="EMDB" id="EMD-26259"/>
<dbReference type="EMDB" id="EMD-26485"/>
<dbReference type="EMDB" id="EMD-26651"/>
<dbReference type="EMDB" id="EMD-26686"/>
<dbReference type="EMDB" id="EMD-26703"/>
<dbReference type="EMDB" id="EMD-26941"/>
<dbReference type="EMDB" id="EMD-28610"/>
<dbReference type="EMDB" id="EMD-28632"/>
<dbReference type="EMDB" id="EMD-28633"/>
<dbReference type="EMDB" id="EMD-28634"/>
<dbReference type="EMDB" id="EMD-28635"/>
<dbReference type="EMDB" id="EMD-28636"/>
<dbReference type="EMDB" id="EMD-28642"/>
<dbReference type="EMDB" id="EMD-28643"/>
<dbReference type="EMDB" id="EMD-30108"/>
<dbReference type="EMDB" id="EMD-30170"/>
<dbReference type="EMDB" id="EMD-30174"/>
<dbReference type="EMDB" id="EMD-3461"/>
<dbReference type="EMDB" id="EMD-34725"/>
<dbReference type="EMDB" id="EMD-36839"/>
<dbReference type="EMDB" id="EMD-36945"/>
<dbReference type="EMDB" id="EMD-38660"/>
<dbReference type="EMDB" id="EMD-40990"/>
<dbReference type="EMDB" id="EMD-40991"/>
<dbReference type="EMDB" id="EMD-40992"/>
<dbReference type="EMDB" id="EMD-40993"/>
<dbReference type="EMDB" id="EMD-40997"/>
<dbReference type="EMDB" id="EMD-40998"/>
<dbReference type="EMDB" id="EMD-40999"/>
<dbReference type="EMDB" id="EMD-41000"/>
<dbReference type="EMDB" id="EMD-41001"/>
<dbReference type="EMDB" id="EMD-41002"/>
<dbReference type="EMDB" id="EMD-4140"/>
<dbReference type="EMDB" id="EMD-42525"/>
<dbReference type="EMDB" id="EMD-42540"/>
<dbReference type="EMDB" id="EMD-43017"/>
<dbReference type="EMDB" id="EMD-4302"/>
<dbReference type="EMDB" id="EMD-43021"/>
<dbReference type="EMDB" id="EMD-43027"/>
<dbReference type="EMDB" id="EMD-4427"/>
<dbReference type="EMDB" id="EMD-4474"/>
<dbReference type="EMDB" id="EMD-4560"/>
<dbReference type="EMDB" id="EMD-4630"/>
<dbReference type="EMDB" id="EMD-4636"/>
<dbReference type="EMDB" id="EMD-4751"/>
<dbReference type="EMDB" id="EMD-4752"/>
<dbReference type="EMDB" id="EMD-4753"/>
<dbReference type="EMDB" id="EMD-4884"/>
<dbReference type="EMDB" id="EMD-50259"/>
<dbReference type="EMDB" id="EMD-6878"/>
<dbReference type="EMDB" id="EMD-7324"/>
<dbReference type="EMDB" id="EMD-7445"/>
<dbReference type="EMDB" id="EMD-8362"/>
<dbReference type="EMDB" id="EMD-8368"/>
<dbReference type="SMR" id="P05740"/>
<dbReference type="BioGRID" id="33959">
    <property type="interactions" value="314"/>
</dbReference>
<dbReference type="ComplexPortal" id="CPX-1601">
    <property type="entry name" value="60S cytosolic large ribosomal subunit"/>
</dbReference>
<dbReference type="DIP" id="DIP-5529N"/>
<dbReference type="FunCoup" id="P05740">
    <property type="interactions" value="1198"/>
</dbReference>
<dbReference type="IntAct" id="P05740">
    <property type="interactions" value="161"/>
</dbReference>
<dbReference type="MINT" id="P05740"/>
<dbReference type="STRING" id="4932.YKL180W"/>
<dbReference type="CarbonylDB" id="P05740"/>
<dbReference type="iPTMnet" id="P05740"/>
<dbReference type="PaxDb" id="4932-YKL180W"/>
<dbReference type="PeptideAtlas" id="P05740"/>
<dbReference type="EnsemblFungi" id="YKL180W_mRNA">
    <property type="protein sequence ID" value="YKL180W"/>
    <property type="gene ID" value="YKL180W"/>
</dbReference>
<dbReference type="GeneID" id="853674"/>
<dbReference type="KEGG" id="sce:YKL180W"/>
<dbReference type="AGR" id="SGD:S000001663"/>
<dbReference type="SGD" id="S000001663">
    <property type="gene designation" value="RPL17A"/>
</dbReference>
<dbReference type="VEuPathDB" id="FungiDB:YKL180W"/>
<dbReference type="eggNOG" id="KOG3353">
    <property type="taxonomic scope" value="Eukaryota"/>
</dbReference>
<dbReference type="GeneTree" id="ENSGT00950000183010"/>
<dbReference type="HOGENOM" id="CLU_083987_0_0_1"/>
<dbReference type="InParanoid" id="P05740"/>
<dbReference type="OMA" id="NTYETAR"/>
<dbReference type="OrthoDB" id="10254664at2759"/>
<dbReference type="BioCyc" id="YEAST:G3O-31946-MONOMER"/>
<dbReference type="Reactome" id="R-SCE-156827">
    <property type="pathway name" value="L13a-mediated translational silencing of Ceruloplasmin expression"/>
</dbReference>
<dbReference type="Reactome" id="R-SCE-1799339">
    <property type="pathway name" value="SRP-dependent cotranslational protein targeting to membrane"/>
</dbReference>
<dbReference type="Reactome" id="R-SCE-72689">
    <property type="pathway name" value="Formation of a pool of free 40S subunits"/>
</dbReference>
<dbReference type="Reactome" id="R-SCE-72706">
    <property type="pathway name" value="GTP hydrolysis and joining of the 60S ribosomal subunit"/>
</dbReference>
<dbReference type="Reactome" id="R-SCE-975956">
    <property type="pathway name" value="Nonsense Mediated Decay (NMD) independent of the Exon Junction Complex (EJC)"/>
</dbReference>
<dbReference type="Reactome" id="R-SCE-975957">
    <property type="pathway name" value="Nonsense Mediated Decay (NMD) enhanced by the Exon Junction Complex (EJC)"/>
</dbReference>
<dbReference type="BioGRID-ORCS" id="853674">
    <property type="hits" value="1 hit in 10 CRISPR screens"/>
</dbReference>
<dbReference type="EvolutionaryTrace" id="P05740"/>
<dbReference type="PRO" id="PR:P05740"/>
<dbReference type="Proteomes" id="UP000002311">
    <property type="component" value="Chromosome XI"/>
</dbReference>
<dbReference type="RNAct" id="P05740">
    <property type="molecule type" value="protein"/>
</dbReference>
<dbReference type="GO" id="GO:0005737">
    <property type="term" value="C:cytoplasm"/>
    <property type="evidence" value="ECO:0007005"/>
    <property type="project" value="SGD"/>
</dbReference>
<dbReference type="GO" id="GO:0005829">
    <property type="term" value="C:cytosol"/>
    <property type="evidence" value="ECO:0000304"/>
    <property type="project" value="Reactome"/>
</dbReference>
<dbReference type="GO" id="GO:0022625">
    <property type="term" value="C:cytosolic large ribosomal subunit"/>
    <property type="evidence" value="ECO:0000314"/>
    <property type="project" value="SGD"/>
</dbReference>
<dbReference type="GO" id="GO:0030687">
    <property type="term" value="C:preribosome, large subunit precursor"/>
    <property type="evidence" value="ECO:0000314"/>
    <property type="project" value="SGD"/>
</dbReference>
<dbReference type="GO" id="GO:0003735">
    <property type="term" value="F:structural constituent of ribosome"/>
    <property type="evidence" value="ECO:0000314"/>
    <property type="project" value="SGD"/>
</dbReference>
<dbReference type="GO" id="GO:0000448">
    <property type="term" value="P:cleavage in ITS2 between 5.8S rRNA and LSU-rRNA of tricistronic rRNA transcript (SSU-rRNA, 5.8S rRNA, LSU-rRNA)"/>
    <property type="evidence" value="ECO:0000316"/>
    <property type="project" value="SGD"/>
</dbReference>
<dbReference type="GO" id="GO:0002181">
    <property type="term" value="P:cytoplasmic translation"/>
    <property type="evidence" value="ECO:0000314"/>
    <property type="project" value="SGD"/>
</dbReference>
<dbReference type="CDD" id="cd00336">
    <property type="entry name" value="Ribosomal_L22"/>
    <property type="match status" value="1"/>
</dbReference>
<dbReference type="FunFam" id="3.90.470.10:FF:000010">
    <property type="entry name" value="60S ribosomal protein L17"/>
    <property type="match status" value="1"/>
</dbReference>
<dbReference type="Gene3D" id="3.90.470.10">
    <property type="entry name" value="Ribosomal protein L22/L17"/>
    <property type="match status" value="1"/>
</dbReference>
<dbReference type="InterPro" id="IPR001063">
    <property type="entry name" value="Ribosomal_uL22"/>
</dbReference>
<dbReference type="InterPro" id="IPR018260">
    <property type="entry name" value="Ribosomal_uL22_CS"/>
</dbReference>
<dbReference type="InterPro" id="IPR005721">
    <property type="entry name" value="Ribosomal_uL22_euk/arc"/>
</dbReference>
<dbReference type="InterPro" id="IPR036394">
    <property type="entry name" value="Ribosomal_uL22_sf"/>
</dbReference>
<dbReference type="NCBIfam" id="TIGR01038">
    <property type="entry name" value="uL22_arch_euk"/>
    <property type="match status" value="1"/>
</dbReference>
<dbReference type="PANTHER" id="PTHR11593">
    <property type="entry name" value="60S RIBOSOMAL PROTEIN L17"/>
    <property type="match status" value="1"/>
</dbReference>
<dbReference type="PANTHER" id="PTHR11593:SF10">
    <property type="entry name" value="60S RIBOSOMAL PROTEIN L17"/>
    <property type="match status" value="1"/>
</dbReference>
<dbReference type="Pfam" id="PF00237">
    <property type="entry name" value="Ribosomal_L22"/>
    <property type="match status" value="1"/>
</dbReference>
<dbReference type="SUPFAM" id="SSF54843">
    <property type="entry name" value="Ribosomal protein L22"/>
    <property type="match status" value="1"/>
</dbReference>
<dbReference type="PROSITE" id="PS00464">
    <property type="entry name" value="RIBOSOMAL_L22"/>
    <property type="match status" value="1"/>
</dbReference>
<gene>
    <name evidence="6" type="primary">RPL17A</name>
    <name type="synonym">RPL17</name>
    <name type="synonym">RPL20A</name>
    <name type="ordered locus">YKL180W</name>
</gene>
<accession>P05740</accession>
<accession>D6VX21</accession>
<comment type="function">
    <text evidence="8">Component of the ribosome, a large ribonucleoprotein complex responsible for the synthesis of proteins in the cell. The small ribosomal subunit (SSU) binds messenger RNAs (mRNAs) and translates the encoded message by selecting cognate aminoacyl-transfer RNA (tRNA) molecules. The large subunit (LSU) contains the ribosomal catalytic site termed the peptidyl transferase center (PTC), which catalyzes the formation of peptide bonds, thereby polymerizing the amino acids delivered by tRNAs into a polypeptide chain. The nascent polypeptides leave the ribosome through a tunnel in the LSU and interact with protein factors that function in enzymatic processing, targeting, and the membrane insertion of nascent chains at the exit of the ribosomal tunnel.</text>
</comment>
<comment type="subunit">
    <text evidence="4 9">Component of the large ribosomal subunit (LSU). Mature yeast ribosomes consist of a small (40S) and a large (60S) subunit. The 40S small subunit contains 1 molecule of ribosomal RNA (18S rRNA) and 33 different proteins (encoded by 57 genes). The large 60S subunit contains 3 rRNA molecules (25S, 5.8S and 5S rRNA) and 46 different proteins (encoded by 81 genes). uL22 is associated with the polypeptide exit tunnel (PubMed:22096102, PubMed:9559554).</text>
</comment>
<comment type="subcellular location">
    <subcellularLocation>
        <location evidence="2 4">Cytoplasm</location>
    </subcellularLocation>
</comment>
<comment type="miscellaneous">
    <text evidence="7">There are 2 genes for uL22 in yeast.</text>
</comment>
<comment type="similarity">
    <text evidence="7">Belongs to the universal ribosomal protein uL22 family.</text>
</comment>
<name>RL17A_YEAST</name>
<sequence length="184" mass="20549">MARYGATSTNPAKSASARGSYLRVSFKNTRETAQAINGWELTKAQKYLEQVLDHQRAIPFRRFNSSIGRTAQGKEFGVTKARWPAKSVKFVQGLLQNAAANAEAKGLDATKLYVSHIQVNQAPKQRRRTYRAHGRINKYESSPSHIELVVTEKEEAVAKAAEKKVVRLTSRQRGRIAAQKRIAA</sequence>
<reference key="1">
    <citation type="journal article" date="1994" name="Nature">
        <title>Complete DNA sequence of yeast chromosome XI.</title>
        <authorList>
            <person name="Dujon B."/>
            <person name="Alexandraki D."/>
            <person name="Andre B."/>
            <person name="Ansorge W."/>
            <person name="Baladron V."/>
            <person name="Ballesta J.P.G."/>
            <person name="Banrevi A."/>
            <person name="Bolle P.-A."/>
            <person name="Bolotin-Fukuhara M."/>
            <person name="Bossier P."/>
            <person name="Bou G."/>
            <person name="Boyer J."/>
            <person name="Buitrago M.J."/>
            <person name="Cheret G."/>
            <person name="Colleaux L."/>
            <person name="Daignan-Fornier B."/>
            <person name="del Rey F."/>
            <person name="Dion C."/>
            <person name="Domdey H."/>
            <person name="Duesterhoeft A."/>
            <person name="Duesterhus S."/>
            <person name="Entian K.-D."/>
            <person name="Erfle H."/>
            <person name="Esteban P.F."/>
            <person name="Feldmann H."/>
            <person name="Fernandes L."/>
            <person name="Fobo G.M."/>
            <person name="Fritz C."/>
            <person name="Fukuhara H."/>
            <person name="Gabel C."/>
            <person name="Gaillon L."/>
            <person name="Garcia-Cantalejo J.M."/>
            <person name="Garcia-Ramirez J.J."/>
            <person name="Gent M.E."/>
            <person name="Ghazvini M."/>
            <person name="Goffeau A."/>
            <person name="Gonzalez A."/>
            <person name="Grothues D."/>
            <person name="Guerreiro P."/>
            <person name="Hegemann J.H."/>
            <person name="Hewitt N."/>
            <person name="Hilger F."/>
            <person name="Hollenberg C.P."/>
            <person name="Horaitis O."/>
            <person name="Indge K.J."/>
            <person name="Jacquier A."/>
            <person name="James C.M."/>
            <person name="Jauniaux J.-C."/>
            <person name="Jimenez A."/>
            <person name="Keuchel H."/>
            <person name="Kirchrath L."/>
            <person name="Kleine K."/>
            <person name="Koetter P."/>
            <person name="Legrain P."/>
            <person name="Liebl S."/>
            <person name="Louis E.J."/>
            <person name="Maia e Silva A."/>
            <person name="Marck C."/>
            <person name="Monnier A.-L."/>
            <person name="Moestl D."/>
            <person name="Mueller S."/>
            <person name="Obermaier B."/>
            <person name="Oliver S.G."/>
            <person name="Pallier C."/>
            <person name="Pascolo S."/>
            <person name="Pfeiffer F."/>
            <person name="Philippsen P."/>
            <person name="Planta R.J."/>
            <person name="Pohl F.M."/>
            <person name="Pohl T.M."/>
            <person name="Poehlmann R."/>
            <person name="Portetelle D."/>
            <person name="Purnelle B."/>
            <person name="Puzos V."/>
            <person name="Ramezani Rad M."/>
            <person name="Rasmussen S.W."/>
            <person name="Remacha M.A."/>
            <person name="Revuelta J.L."/>
            <person name="Richard G.-F."/>
            <person name="Rieger M."/>
            <person name="Rodrigues-Pousada C."/>
            <person name="Rose M."/>
            <person name="Rupp T."/>
            <person name="Santos M.A."/>
            <person name="Schwager C."/>
            <person name="Sensen C."/>
            <person name="Skala J."/>
            <person name="Soares H."/>
            <person name="Sor F."/>
            <person name="Stegemann J."/>
            <person name="Tettelin H."/>
            <person name="Thierry A."/>
            <person name="Tzermia M."/>
            <person name="Urrestarazu L.A."/>
            <person name="van Dyck L."/>
            <person name="van Vliet-Reedijk J.C."/>
            <person name="Valens M."/>
            <person name="Vandenbol M."/>
            <person name="Vilela C."/>
            <person name="Vissers S."/>
            <person name="von Wettstein D."/>
            <person name="Voss H."/>
            <person name="Wiemann S."/>
            <person name="Xu G."/>
            <person name="Zimmermann J."/>
            <person name="Haasemann M."/>
            <person name="Becker I."/>
            <person name="Mewes H.-W."/>
        </authorList>
    </citation>
    <scope>NUCLEOTIDE SEQUENCE [LARGE SCALE GENOMIC DNA]</scope>
    <source>
        <strain>ATCC 204508 / S288c</strain>
    </source>
</reference>
<reference key="2">
    <citation type="journal article" date="2014" name="G3 (Bethesda)">
        <title>The reference genome sequence of Saccharomyces cerevisiae: Then and now.</title>
        <authorList>
            <person name="Engel S.R."/>
            <person name="Dietrich F.S."/>
            <person name="Fisk D.G."/>
            <person name="Binkley G."/>
            <person name="Balakrishnan R."/>
            <person name="Costanzo M.C."/>
            <person name="Dwight S.S."/>
            <person name="Hitz B.C."/>
            <person name="Karra K."/>
            <person name="Nash R.S."/>
            <person name="Weng S."/>
            <person name="Wong E.D."/>
            <person name="Lloyd P."/>
            <person name="Skrzypek M.S."/>
            <person name="Miyasato S.R."/>
            <person name="Simison M."/>
            <person name="Cherry J.M."/>
        </authorList>
    </citation>
    <scope>GENOME REANNOTATION</scope>
    <source>
        <strain>ATCC 204508 / S288c</strain>
    </source>
</reference>
<reference key="3">
    <citation type="journal article" date="1993" name="Yeast">
        <title>Sequencing and analysis of 51.6 kilobases on the left arm of chromosome XI from Saccharomyces cerevisiae reveals 23 open reading frames including the FAS1 gene.</title>
        <authorList>
            <person name="Wiemann S."/>
            <person name="Voss H."/>
            <person name="Schwager C."/>
            <person name="Rupp T."/>
            <person name="Stegemann J."/>
            <person name="Zimmermann J."/>
            <person name="Grothues D."/>
            <person name="Sensen C."/>
            <person name="Erfle H."/>
            <person name="Hewitt N."/>
            <person name="Banrevi A."/>
            <person name="Ansorge W."/>
        </authorList>
    </citation>
    <scope>NUCLEOTIDE SEQUENCE [GENOMIC DNA] OF 1-114</scope>
</reference>
<reference key="4">
    <citation type="journal article" date="1984" name="Mol. Gen. Genet.">
        <title>Yeast ribosomal proteins. VIII. Isolation of two proteins and sequence characterization of twenty-four proteins from cytoplasmic ribosomes.</title>
        <authorList>
            <person name="Otaka E."/>
            <person name="Higo K."/>
            <person name="Itoh T."/>
        </authorList>
    </citation>
    <scope>PARTIAL PROTEIN SEQUENCE OF 2-41</scope>
    <scope>CLEAVAGE OF INITIATOR METHIONINE</scope>
</reference>
<reference key="5">
    <citation type="journal article" date="1998" name="Yeast">
        <title>The list of cytoplasmic ribosomal proteins of Saccharomyces cerevisiae.</title>
        <authorList>
            <person name="Planta R.J."/>
            <person name="Mager W.H."/>
        </authorList>
    </citation>
    <scope>NOMENCLATURE</scope>
    <scope>SUBUNIT</scope>
</reference>
<reference key="6">
    <citation type="journal article" date="1999" name="J. Biol. Chem.">
        <title>The action of N-terminal acetyltransferases on yeast ribosomal proteins.</title>
        <authorList>
            <person name="Arnold R.J."/>
            <person name="Polevoda B."/>
            <person name="Reilly J.P."/>
            <person name="Sherman F."/>
        </authorList>
    </citation>
    <scope>CLEAVAGE OF INITIATOR METHIONINE</scope>
</reference>
<reference key="7">
    <citation type="journal article" date="2003" name="Nature">
        <title>Global analysis of protein localization in budding yeast.</title>
        <authorList>
            <person name="Huh W.-K."/>
            <person name="Falvo J.V."/>
            <person name="Gerke L.C."/>
            <person name="Carroll A.S."/>
            <person name="Howson R.W."/>
            <person name="Weissman J.S."/>
            <person name="O'Shea E.K."/>
        </authorList>
    </citation>
    <scope>SUBCELLULAR LOCATION [LARGE SCALE ANALYSIS]</scope>
</reference>
<reference key="8">
    <citation type="journal article" date="2007" name="Proc. Natl. Acad. Sci. U.S.A.">
        <title>Analysis of phosphorylation sites on proteins from Saccharomyces cerevisiae by electron transfer dissociation (ETD) mass spectrometry.</title>
        <authorList>
            <person name="Chi A."/>
            <person name="Huttenhower C."/>
            <person name="Geer L.Y."/>
            <person name="Coon J.J."/>
            <person name="Syka J.E.P."/>
            <person name="Bai D.L."/>
            <person name="Shabanowitz J."/>
            <person name="Burke D.J."/>
            <person name="Troyanskaya O.G."/>
            <person name="Hunt D.F."/>
        </authorList>
    </citation>
    <scope>PHOSPHORYLATION [LARGE SCALE ANALYSIS] AT THR-70</scope>
    <scope>IDENTIFICATION BY MASS SPECTROMETRY [LARGE SCALE ANALYSIS]</scope>
</reference>
<reference key="9">
    <citation type="journal article" date="2012" name="Proteomics">
        <title>Sites of ubiquitin attachment in Saccharomyces cerevisiae.</title>
        <authorList>
            <person name="Starita L.M."/>
            <person name="Lo R.S."/>
            <person name="Eng J.K."/>
            <person name="von Haller P.D."/>
            <person name="Fields S."/>
        </authorList>
    </citation>
    <scope>UBIQUITINATION [LARGE SCALE ANALYSIS] AT LYS-46</scope>
    <scope>IDENTIFICATION BY MASS SPECTROMETRY [LARGE SCALE ANALYSIS]</scope>
</reference>
<reference key="10">
    <citation type="journal article" date="2014" name="Curr. Opin. Struct. Biol.">
        <title>A new system for naming ribosomal proteins.</title>
        <authorList>
            <person name="Ban N."/>
            <person name="Beckmann R."/>
            <person name="Cate J.H.D."/>
            <person name="Dinman J.D."/>
            <person name="Dragon F."/>
            <person name="Ellis S.R."/>
            <person name="Lafontaine D.L.J."/>
            <person name="Lindahl L."/>
            <person name="Liljas A."/>
            <person name="Lipton J.M."/>
            <person name="McAlear M.A."/>
            <person name="Moore P.B."/>
            <person name="Noller H.F."/>
            <person name="Ortega J."/>
            <person name="Panse V.G."/>
            <person name="Ramakrishnan V."/>
            <person name="Spahn C.M.T."/>
            <person name="Steitz T.A."/>
            <person name="Tchorzewski M."/>
            <person name="Tollervey D."/>
            <person name="Warren A.J."/>
            <person name="Williamson J.R."/>
            <person name="Wilson D."/>
            <person name="Yonath A."/>
            <person name="Yusupov M."/>
        </authorList>
    </citation>
    <scope>NOMENCLATURE</scope>
</reference>
<reference key="11">
    <citation type="journal article" date="2001" name="Cell">
        <title>Structure of the 80S ribosome from Saccharomyces cerevisiae -- tRNA-ribosome and subunit-subunit interactions.</title>
        <authorList>
            <person name="Spahn C.M.T."/>
            <person name="Beckmann R."/>
            <person name="Eswar N."/>
            <person name="Penczek P.A."/>
            <person name="Sali A."/>
            <person name="Blobel G."/>
            <person name="Frank J."/>
        </authorList>
    </citation>
    <scope>3D-STRUCTURE MODELING OF 6-152</scope>
    <scope>ELECTRON MICROSCOPY</scope>
</reference>
<reference key="12">
    <citation type="journal article" date="2004" name="EMBO J.">
        <title>Domain movements of elongation factor eEF2 and the eukaryotic 80S ribosome facilitate tRNA translocation.</title>
        <authorList>
            <person name="Spahn C.M.T."/>
            <person name="Gomez-Lorenzo M.G."/>
            <person name="Grassucci R.A."/>
            <person name="Joergensen R."/>
            <person name="Andersen G.R."/>
            <person name="Beckmann R."/>
            <person name="Penczek P.A."/>
            <person name="Ballesta J.P.G."/>
            <person name="Frank J."/>
        </authorList>
    </citation>
    <scope>3D-STRUCTURE MODELING</scope>
    <scope>ELECTRON MICROSCOPY</scope>
</reference>
<reference key="13">
    <citation type="journal article" date="2010" name="Science">
        <title>Crystal structure of the eukaryotic ribosome.</title>
        <authorList>
            <person name="Ben-Shem A."/>
            <person name="Jenner L."/>
            <person name="Yusupova G."/>
            <person name="Yusupov M."/>
        </authorList>
    </citation>
    <scope>X-RAY CRYSTALLOGRAPHY (4.0 ANGSTROMS) OF 80S RIBOSOME</scope>
</reference>
<reference key="14">
    <citation type="journal article" date="2011" name="Science">
        <title>The structure of the eukaryotic ribosome at 3.0 A resolution.</title>
        <authorList>
            <person name="Ben-Shem A."/>
            <person name="Garreau de Loubresse N."/>
            <person name="Melnikov S."/>
            <person name="Jenner L."/>
            <person name="Yusupova G."/>
            <person name="Yusupov M."/>
        </authorList>
    </citation>
    <scope>X-RAY CRYSTALLOGRAPHY (3.0 ANGSTROMS) OF 80S RIBOSOME</scope>
    <scope>SUBUNIT</scope>
    <scope>SUBCELLULAR LOCATION</scope>
</reference>
<feature type="initiator methionine" description="Removed" evidence="1 3">
    <location>
        <position position="1"/>
    </location>
</feature>
<feature type="chain" id="PRO_0000125347" description="Large ribosomal subunit protein uL22A">
    <location>
        <begin position="2"/>
        <end position="184"/>
    </location>
</feature>
<feature type="modified residue" description="Phosphothreonine" evidence="10">
    <location>
        <position position="70"/>
    </location>
</feature>
<feature type="cross-link" description="Glycyl lysine isopeptide (Lys-Gly) (interchain with G-Cter in ubiquitin)" evidence="11">
    <location>
        <position position="46"/>
    </location>
</feature>
<feature type="sequence conflict" description="In Ref. 3; CAA52258." evidence="7" ref="3">
    <original>AKGLDATKLYV</original>
    <variation>VCQEYYMFSTR</variation>
    <location>
        <begin position="104"/>
        <end position="114"/>
    </location>
</feature>
<feature type="helix" evidence="12">
    <location>
        <begin position="11"/>
        <end position="13"/>
    </location>
</feature>
<feature type="strand" evidence="12">
    <location>
        <begin position="14"/>
        <end position="22"/>
    </location>
</feature>
<feature type="helix" evidence="13">
    <location>
        <begin position="26"/>
        <end position="31"/>
    </location>
</feature>
<feature type="turn" evidence="12">
    <location>
        <begin position="35"/>
        <end position="38"/>
    </location>
</feature>
<feature type="helix" evidence="12">
    <location>
        <begin position="41"/>
        <end position="52"/>
    </location>
</feature>
<feature type="helix" evidence="13">
    <location>
        <begin position="85"/>
        <end position="89"/>
    </location>
</feature>
<feature type="strand" evidence="12">
    <location>
        <begin position="112"/>
        <end position="121"/>
    </location>
</feature>
<feature type="strand" evidence="13">
    <location>
        <begin position="127"/>
        <end position="129"/>
    </location>
</feature>
<feature type="strand" evidence="13">
    <location>
        <begin position="132"/>
        <end position="134"/>
    </location>
</feature>
<feature type="strand" evidence="13">
    <location>
        <begin position="137"/>
        <end position="139"/>
    </location>
</feature>
<feature type="strand" evidence="12">
    <location>
        <begin position="144"/>
        <end position="152"/>
    </location>
</feature>
<evidence type="ECO:0000269" key="1">
    <source>
    </source>
</evidence>
<evidence type="ECO:0000269" key="2">
    <source>
    </source>
</evidence>
<evidence type="ECO:0000269" key="3">
    <source>
    </source>
</evidence>
<evidence type="ECO:0000269" key="4">
    <source>
    </source>
</evidence>
<evidence type="ECO:0000303" key="5">
    <source>
    </source>
</evidence>
<evidence type="ECO:0000303" key="6">
    <source>
    </source>
</evidence>
<evidence type="ECO:0000305" key="7"/>
<evidence type="ECO:0000305" key="8">
    <source>
    </source>
</evidence>
<evidence type="ECO:0000305" key="9">
    <source>
    </source>
</evidence>
<evidence type="ECO:0007744" key="10">
    <source>
    </source>
</evidence>
<evidence type="ECO:0007744" key="11">
    <source>
    </source>
</evidence>
<evidence type="ECO:0007829" key="12">
    <source>
        <dbReference type="PDB" id="6EM3"/>
    </source>
</evidence>
<evidence type="ECO:0007829" key="13">
    <source>
        <dbReference type="PDB" id="7NAD"/>
    </source>
</evidence>
<organism>
    <name type="scientific">Saccharomyces cerevisiae (strain ATCC 204508 / S288c)</name>
    <name type="common">Baker's yeast</name>
    <dbReference type="NCBI Taxonomy" id="559292"/>
    <lineage>
        <taxon>Eukaryota</taxon>
        <taxon>Fungi</taxon>
        <taxon>Dikarya</taxon>
        <taxon>Ascomycota</taxon>
        <taxon>Saccharomycotina</taxon>
        <taxon>Saccharomycetes</taxon>
        <taxon>Saccharomycetales</taxon>
        <taxon>Saccharomycetaceae</taxon>
        <taxon>Saccharomyces</taxon>
    </lineage>
</organism>
<protein>
    <recommendedName>
        <fullName evidence="5">Large ribosomal subunit protein uL22A</fullName>
    </recommendedName>
    <alternativeName>
        <fullName evidence="6">60S ribosomal protein L17-A</fullName>
    </alternativeName>
    <alternativeName>
        <fullName>L20A</fullName>
    </alternativeName>
    <alternativeName>
        <fullName>YL17</fullName>
    </alternativeName>
</protein>